<comment type="function">
    <text evidence="1">Catalyzes oxygen-dependent 5-hydroxyuridine (ho5U) modification at position 34 in tRNAs.</text>
</comment>
<comment type="catalytic activity">
    <reaction evidence="1">
        <text>uridine(34) in tRNA + AH2 + O2 = 5-hydroxyuridine(34) in tRNA + A + H2O</text>
        <dbReference type="Rhea" id="RHEA:64224"/>
        <dbReference type="Rhea" id="RHEA-COMP:11727"/>
        <dbReference type="Rhea" id="RHEA-COMP:13381"/>
        <dbReference type="ChEBI" id="CHEBI:13193"/>
        <dbReference type="ChEBI" id="CHEBI:15377"/>
        <dbReference type="ChEBI" id="CHEBI:15379"/>
        <dbReference type="ChEBI" id="CHEBI:17499"/>
        <dbReference type="ChEBI" id="CHEBI:65315"/>
        <dbReference type="ChEBI" id="CHEBI:136877"/>
    </reaction>
</comment>
<comment type="similarity">
    <text evidence="1">Belongs to the TrhO family.</text>
</comment>
<reference key="1">
    <citation type="journal article" date="2008" name="Genome Res.">
        <title>Comparative genome analysis of Salmonella enteritidis PT4 and Salmonella gallinarum 287/91 provides insights into evolutionary and host adaptation pathways.</title>
        <authorList>
            <person name="Thomson N.R."/>
            <person name="Clayton D.J."/>
            <person name="Windhorst D."/>
            <person name="Vernikos G."/>
            <person name="Davidson S."/>
            <person name="Churcher C."/>
            <person name="Quail M.A."/>
            <person name="Stevens M."/>
            <person name="Jones M.A."/>
            <person name="Watson M."/>
            <person name="Barron A."/>
            <person name="Layton A."/>
            <person name="Pickard D."/>
            <person name="Kingsley R.A."/>
            <person name="Bignell A."/>
            <person name="Clark L."/>
            <person name="Harris B."/>
            <person name="Ormond D."/>
            <person name="Abdellah Z."/>
            <person name="Brooks K."/>
            <person name="Cherevach I."/>
            <person name="Chillingworth T."/>
            <person name="Woodward J."/>
            <person name="Norberczak H."/>
            <person name="Lord A."/>
            <person name="Arrowsmith C."/>
            <person name="Jagels K."/>
            <person name="Moule S."/>
            <person name="Mungall K."/>
            <person name="Saunders M."/>
            <person name="Whitehead S."/>
            <person name="Chabalgoity J.A."/>
            <person name="Maskell D."/>
            <person name="Humphreys T."/>
            <person name="Roberts M."/>
            <person name="Barrow P.A."/>
            <person name="Dougan G."/>
            <person name="Parkhill J."/>
        </authorList>
    </citation>
    <scope>NUCLEOTIDE SEQUENCE [LARGE SCALE GENOMIC DNA]</scope>
    <source>
        <strain>287/91 / NCTC 13346</strain>
    </source>
</reference>
<proteinExistence type="inferred from homology"/>
<accession>B5RBE4</accession>
<dbReference type="EC" id="1.14.-.-" evidence="1"/>
<dbReference type="EMBL" id="AM933173">
    <property type="protein sequence ID" value="CAR37816.1"/>
    <property type="molecule type" value="Genomic_DNA"/>
</dbReference>
<dbReference type="RefSeq" id="WP_001144636.1">
    <property type="nucleotide sequence ID" value="NC_011274.1"/>
</dbReference>
<dbReference type="SMR" id="B5RBE4"/>
<dbReference type="KEGG" id="seg:SG1966"/>
<dbReference type="HOGENOM" id="CLU_038878_1_1_6"/>
<dbReference type="Proteomes" id="UP000008321">
    <property type="component" value="Chromosome"/>
</dbReference>
<dbReference type="GO" id="GO:0016705">
    <property type="term" value="F:oxidoreductase activity, acting on paired donors, with incorporation or reduction of molecular oxygen"/>
    <property type="evidence" value="ECO:0007669"/>
    <property type="project" value="UniProtKB-UniRule"/>
</dbReference>
<dbReference type="GO" id="GO:0006400">
    <property type="term" value="P:tRNA modification"/>
    <property type="evidence" value="ECO:0007669"/>
    <property type="project" value="UniProtKB-UniRule"/>
</dbReference>
<dbReference type="CDD" id="cd01518">
    <property type="entry name" value="RHOD_YceA"/>
    <property type="match status" value="1"/>
</dbReference>
<dbReference type="Gene3D" id="3.30.70.100">
    <property type="match status" value="1"/>
</dbReference>
<dbReference type="Gene3D" id="3.40.250.10">
    <property type="entry name" value="Rhodanese-like domain"/>
    <property type="match status" value="1"/>
</dbReference>
<dbReference type="HAMAP" id="MF_00469">
    <property type="entry name" value="TrhO"/>
    <property type="match status" value="1"/>
</dbReference>
<dbReference type="InterPro" id="IPR001763">
    <property type="entry name" value="Rhodanese-like_dom"/>
</dbReference>
<dbReference type="InterPro" id="IPR036873">
    <property type="entry name" value="Rhodanese-like_dom_sf"/>
</dbReference>
<dbReference type="InterPro" id="IPR022111">
    <property type="entry name" value="Rhodanese_C"/>
</dbReference>
<dbReference type="InterPro" id="IPR020936">
    <property type="entry name" value="TrhO"/>
</dbReference>
<dbReference type="InterPro" id="IPR040503">
    <property type="entry name" value="TRHO_N"/>
</dbReference>
<dbReference type="NCBIfam" id="NF001133">
    <property type="entry name" value="PRK00142.1-1"/>
    <property type="match status" value="1"/>
</dbReference>
<dbReference type="PANTHER" id="PTHR43846:SF1">
    <property type="entry name" value="TRNA URIDINE(34) HYDROXYLASE"/>
    <property type="match status" value="1"/>
</dbReference>
<dbReference type="PANTHER" id="PTHR43846">
    <property type="entry name" value="UPF0176 PROTEIN YCEA"/>
    <property type="match status" value="1"/>
</dbReference>
<dbReference type="Pfam" id="PF00581">
    <property type="entry name" value="Rhodanese"/>
    <property type="match status" value="1"/>
</dbReference>
<dbReference type="Pfam" id="PF12368">
    <property type="entry name" value="Rhodanese_C"/>
    <property type="match status" value="1"/>
</dbReference>
<dbReference type="Pfam" id="PF17773">
    <property type="entry name" value="UPF0176_N"/>
    <property type="match status" value="1"/>
</dbReference>
<dbReference type="SMART" id="SM00450">
    <property type="entry name" value="RHOD"/>
    <property type="match status" value="1"/>
</dbReference>
<dbReference type="SUPFAM" id="SSF52821">
    <property type="entry name" value="Rhodanese/Cell cycle control phosphatase"/>
    <property type="match status" value="1"/>
</dbReference>
<dbReference type="PROSITE" id="PS50206">
    <property type="entry name" value="RHODANESE_3"/>
    <property type="match status" value="1"/>
</dbReference>
<protein>
    <recommendedName>
        <fullName evidence="1">tRNA uridine(34) hydroxylase</fullName>
        <ecNumber evidence="1">1.14.-.-</ecNumber>
    </recommendedName>
    <alternativeName>
        <fullName evidence="1">tRNA hydroxylation protein O</fullName>
    </alternativeName>
</protein>
<feature type="chain" id="PRO_1000200374" description="tRNA uridine(34) hydroxylase">
    <location>
        <begin position="1"/>
        <end position="350"/>
    </location>
</feature>
<feature type="domain" description="Rhodanese" evidence="1">
    <location>
        <begin position="146"/>
        <end position="240"/>
    </location>
</feature>
<feature type="region of interest" description="Disordered" evidence="2">
    <location>
        <begin position="319"/>
        <end position="350"/>
    </location>
</feature>
<feature type="compositionally biased region" description="Basic and acidic residues" evidence="2">
    <location>
        <begin position="319"/>
        <end position="328"/>
    </location>
</feature>
<feature type="active site" description="Cysteine persulfide intermediate" evidence="1">
    <location>
        <position position="200"/>
    </location>
</feature>
<sequence>MPVLHNRISNDELKAKMLAESEPRTTISFYKYFTIASPQQTRDALYQVFTALDVFGRVYLAHEGINAQISVPQSKVETFRQQLYTFDPALDGLRLNIALEDDGKSFWVLRMKVRDRIVADGIDDPTFDASNVGDYLKAADVNAMLDDPDAVFIDMRNHYEYEVGHFENALEIPADTFREQLPKAVEMLREHADKKIVMYCTGGIRCEKASAWMKHNGFNKVWHIEGGIIEYARRAREQGLPVRFIGKNFVFDERMGERISDEVIAHCHQCGAPCDSHTNCKNDGCHLLFIQCPKCASKFNGCCSEQCCEELALPEEEQRRRRAGRENGNKIFNKSRGRLNSKLSIPDPAE</sequence>
<organism>
    <name type="scientific">Salmonella gallinarum (strain 287/91 / NCTC 13346)</name>
    <dbReference type="NCBI Taxonomy" id="550538"/>
    <lineage>
        <taxon>Bacteria</taxon>
        <taxon>Pseudomonadati</taxon>
        <taxon>Pseudomonadota</taxon>
        <taxon>Gammaproteobacteria</taxon>
        <taxon>Enterobacterales</taxon>
        <taxon>Enterobacteriaceae</taxon>
        <taxon>Salmonella</taxon>
    </lineage>
</organism>
<gene>
    <name evidence="1" type="primary">trhO</name>
    <name type="synonym">yceA</name>
    <name type="ordered locus">SG1966</name>
</gene>
<evidence type="ECO:0000255" key="1">
    <source>
        <dbReference type="HAMAP-Rule" id="MF_00469"/>
    </source>
</evidence>
<evidence type="ECO:0000256" key="2">
    <source>
        <dbReference type="SAM" id="MobiDB-lite"/>
    </source>
</evidence>
<name>TRHO_SALG2</name>
<keyword id="KW-0560">Oxidoreductase</keyword>
<keyword id="KW-0819">tRNA processing</keyword>